<evidence type="ECO:0000256" key="1">
    <source>
        <dbReference type="SAM" id="MobiDB-lite"/>
    </source>
</evidence>
<reference key="1">
    <citation type="journal article" date="1998" name="Science">
        <title>Genome sequence of the nematode C. elegans: a platform for investigating biology.</title>
        <authorList>
            <consortium name="The C. elegans sequencing consortium"/>
        </authorList>
    </citation>
    <scope>NUCLEOTIDE SEQUENCE [LARGE SCALE GENOMIC DNA]</scope>
    <source>
        <strain>Bristol N2</strain>
    </source>
</reference>
<name>YT65_CAEEL</name>
<dbReference type="EMBL" id="FO080238">
    <property type="protein sequence ID" value="CCD62252.1"/>
    <property type="molecule type" value="Genomic_DNA"/>
</dbReference>
<dbReference type="PIR" id="T15357">
    <property type="entry name" value="T15357"/>
</dbReference>
<dbReference type="RefSeq" id="NP_509542.2">
    <property type="nucleotide sequence ID" value="NM_077141.4"/>
</dbReference>
<dbReference type="FunCoup" id="Q11081">
    <property type="interactions" value="1522"/>
</dbReference>
<dbReference type="PaxDb" id="6239-B0563.5"/>
<dbReference type="EnsemblMetazoa" id="B0563.5.1">
    <property type="protein sequence ID" value="B0563.5.1"/>
    <property type="gene ID" value="WBGene00015262"/>
</dbReference>
<dbReference type="GeneID" id="182039"/>
<dbReference type="KEGG" id="cel:CELE_B0563.5"/>
<dbReference type="UCSC" id="B0563.5">
    <property type="organism name" value="c. elegans"/>
</dbReference>
<dbReference type="AGR" id="WB:WBGene00015262"/>
<dbReference type="CTD" id="182039"/>
<dbReference type="WormBase" id="B0563.5">
    <property type="protein sequence ID" value="CE39666"/>
    <property type="gene ID" value="WBGene00015262"/>
</dbReference>
<dbReference type="eggNOG" id="ENOG502R8F6">
    <property type="taxonomic scope" value="Eukaryota"/>
</dbReference>
<dbReference type="HOGENOM" id="CLU_2123289_0_0_1"/>
<dbReference type="InParanoid" id="Q11081"/>
<dbReference type="OMA" id="KLELCMS"/>
<dbReference type="OrthoDB" id="5842343at2759"/>
<dbReference type="PRO" id="PR:Q11081"/>
<dbReference type="Proteomes" id="UP000001940">
    <property type="component" value="Chromosome X"/>
</dbReference>
<dbReference type="Bgee" id="WBGene00015262">
    <property type="expression patterns" value="Expressed in adult organism and 2 other cell types or tissues"/>
</dbReference>
<keyword id="KW-1185">Reference proteome</keyword>
<gene>
    <name type="ORF">B0563.5</name>
</gene>
<accession>Q11081</accession>
<organism>
    <name type="scientific">Caenorhabditis elegans</name>
    <dbReference type="NCBI Taxonomy" id="6239"/>
    <lineage>
        <taxon>Eukaryota</taxon>
        <taxon>Metazoa</taxon>
        <taxon>Ecdysozoa</taxon>
        <taxon>Nematoda</taxon>
        <taxon>Chromadorea</taxon>
        <taxon>Rhabditida</taxon>
        <taxon>Rhabditina</taxon>
        <taxon>Rhabditomorpha</taxon>
        <taxon>Rhabditoidea</taxon>
        <taxon>Rhabditidae</taxon>
        <taxon>Peloderinae</taxon>
        <taxon>Caenorhabditis</taxon>
    </lineage>
</organism>
<sequence length="114" mass="12940">MTSTSVYFNDYYNRRASSSKLELCMSPSSSTISKSHSLDEIPDVSARRRHPSLGFLEFSKTANFRSRRDAVFEPLEFQRVLVTVTSAQIVESSQKRKPEESTIGMDAPKKMKRG</sequence>
<feature type="chain" id="PRO_0000065093" description="Uncharacterized protein B0563.5">
    <location>
        <begin position="1"/>
        <end position="114"/>
    </location>
</feature>
<feature type="region of interest" description="Disordered" evidence="1">
    <location>
        <begin position="90"/>
        <end position="114"/>
    </location>
</feature>
<protein>
    <recommendedName>
        <fullName>Uncharacterized protein B0563.5</fullName>
    </recommendedName>
</protein>
<proteinExistence type="predicted"/>